<organism>
    <name type="scientific">Saccharomyces cerevisiae (strain YJM789)</name>
    <name type="common">Baker's yeast</name>
    <dbReference type="NCBI Taxonomy" id="307796"/>
    <lineage>
        <taxon>Eukaryota</taxon>
        <taxon>Fungi</taxon>
        <taxon>Dikarya</taxon>
        <taxon>Ascomycota</taxon>
        <taxon>Saccharomycotina</taxon>
        <taxon>Saccharomycetes</taxon>
        <taxon>Saccharomycetales</taxon>
        <taxon>Saccharomycetaceae</taxon>
        <taxon>Saccharomyces</taxon>
    </lineage>
</organism>
<feature type="chain" id="PRO_0000308913" description="Sphingosine N-acyltransferase LAG1">
    <location>
        <begin position="1"/>
        <end position="411"/>
    </location>
</feature>
<feature type="topological domain" description="Cytoplasmic" evidence="1">
    <location>
        <begin position="1"/>
        <end position="81"/>
    </location>
</feature>
<feature type="transmembrane region" description="Helical" evidence="3">
    <location>
        <begin position="82"/>
        <end position="102"/>
    </location>
</feature>
<feature type="topological domain" description="Lumenal" evidence="1">
    <location>
        <begin position="103"/>
        <end position="134"/>
    </location>
</feature>
<feature type="transmembrane region" description="Helical" evidence="3">
    <location>
        <begin position="135"/>
        <end position="155"/>
    </location>
</feature>
<feature type="topological domain" description="Cytoplasmic" evidence="1">
    <location>
        <begin position="156"/>
        <end position="176"/>
    </location>
</feature>
<feature type="transmembrane region" description="Helical" evidence="3">
    <location>
        <begin position="177"/>
        <end position="197"/>
    </location>
</feature>
<feature type="topological domain" description="Lumenal" evidence="1">
    <location>
        <begin position="198"/>
        <end position="211"/>
    </location>
</feature>
<feature type="transmembrane region" description="Helical" evidence="3">
    <location>
        <begin position="212"/>
        <end position="232"/>
    </location>
</feature>
<feature type="topological domain" description="Cytoplasmic" evidence="1">
    <location>
        <begin position="233"/>
        <end position="251"/>
    </location>
</feature>
<feature type="transmembrane region" description="Helical" evidence="3">
    <location>
        <begin position="252"/>
        <end position="272"/>
    </location>
</feature>
<feature type="topological domain" description="Lumenal" evidence="1">
    <location>
        <begin position="273"/>
        <end position="296"/>
    </location>
</feature>
<feature type="transmembrane region" description="Helical" evidence="3">
    <location>
        <begin position="297"/>
        <end position="317"/>
    </location>
</feature>
<feature type="topological domain" description="Cytoplasmic" evidence="1">
    <location>
        <begin position="318"/>
        <end position="355"/>
    </location>
</feature>
<feature type="transmembrane region" description="Helical" evidence="3">
    <location>
        <begin position="356"/>
        <end position="376"/>
    </location>
</feature>
<feature type="topological domain" description="Lumenal" evidence="1">
    <location>
        <begin position="377"/>
        <end position="411"/>
    </location>
</feature>
<feature type="domain" description="TLC" evidence="4">
    <location>
        <begin position="168"/>
        <end position="384"/>
    </location>
</feature>
<feature type="region of interest" description="Disordered" evidence="5">
    <location>
        <begin position="390"/>
        <end position="411"/>
    </location>
</feature>
<feature type="modified residue" description="Phosphoserine" evidence="2">
    <location>
        <position position="23"/>
    </location>
</feature>
<feature type="modified residue" description="Phosphoserine" evidence="2">
    <location>
        <position position="24"/>
    </location>
</feature>
<feature type="glycosylation site" description="N-linked (GlcNAc...) asparagine" evidence="3">
    <location>
        <position position="103"/>
    </location>
</feature>
<protein>
    <recommendedName>
        <fullName>Sphingosine N-acyltransferase LAG1</fullName>
        <ecNumber>2.3.1.24</ecNumber>
    </recommendedName>
    <alternativeName>
        <fullName>Longevity assurance factor 1</fullName>
    </alternativeName>
    <alternativeName>
        <fullName>Longevity assurance protein 1</fullName>
    </alternativeName>
</protein>
<reference key="1">
    <citation type="journal article" date="2007" name="Proc. Natl. Acad. Sci. U.S.A.">
        <title>Genome sequencing and comparative analysis of Saccharomyces cerevisiae strain YJM789.</title>
        <authorList>
            <person name="Wei W."/>
            <person name="McCusker J.H."/>
            <person name="Hyman R.W."/>
            <person name="Jones T."/>
            <person name="Ning Y."/>
            <person name="Cao Z."/>
            <person name="Gu Z."/>
            <person name="Bruno D."/>
            <person name="Miranda M."/>
            <person name="Nguyen M."/>
            <person name="Wilhelmy J."/>
            <person name="Komp C."/>
            <person name="Tamse R."/>
            <person name="Wang X."/>
            <person name="Jia P."/>
            <person name="Luedi P."/>
            <person name="Oefner P.J."/>
            <person name="David L."/>
            <person name="Dietrich F.S."/>
            <person name="Li Y."/>
            <person name="Davis R.W."/>
            <person name="Steinmetz L.M."/>
        </authorList>
    </citation>
    <scope>NUCLEOTIDE SEQUENCE [LARGE SCALE GENOMIC DNA]</scope>
    <source>
        <strain>YJM789</strain>
    </source>
</reference>
<evidence type="ECO:0000250" key="1"/>
<evidence type="ECO:0000250" key="2">
    <source>
        <dbReference type="UniProtKB" id="P38703"/>
    </source>
</evidence>
<evidence type="ECO:0000255" key="3"/>
<evidence type="ECO:0000255" key="4">
    <source>
        <dbReference type="PROSITE-ProRule" id="PRU00205"/>
    </source>
</evidence>
<evidence type="ECO:0000256" key="5">
    <source>
        <dbReference type="SAM" id="MobiDB-lite"/>
    </source>
</evidence>
<evidence type="ECO:0000305" key="6"/>
<comment type="function">
    <text evidence="1">Component of the ceramide synthase complex required for C26-CoA-dependent ceramide synthesis. Redundant to LAC1. Facilitates ER-to-Golgi transport of GPI-anchored proteins. Involved in the aging process (By similarity).</text>
</comment>
<comment type="catalytic activity">
    <reaction>
        <text>a fatty acyl-CoA + sphing-4-enine = an N-acylsphing-4-enine + CoA + H(+)</text>
        <dbReference type="Rhea" id="RHEA:23768"/>
        <dbReference type="ChEBI" id="CHEBI:15378"/>
        <dbReference type="ChEBI" id="CHEBI:52639"/>
        <dbReference type="ChEBI" id="CHEBI:57287"/>
        <dbReference type="ChEBI" id="CHEBI:57756"/>
        <dbReference type="ChEBI" id="CHEBI:77636"/>
        <dbReference type="EC" id="2.3.1.24"/>
    </reaction>
</comment>
<comment type="subcellular location">
    <subcellularLocation>
        <location evidence="1">Endoplasmic reticulum membrane</location>
        <topology evidence="1">Multi-pass membrane protein</topology>
    </subcellularLocation>
</comment>
<comment type="similarity">
    <text evidence="6">Belongs to the sphingosine N-acyltransferase family.</text>
</comment>
<proteinExistence type="inferred from homology"/>
<gene>
    <name type="primary">LAG1</name>
    <name type="ORF">SCY_2383</name>
</gene>
<accession>A6ZSP9</accession>
<dbReference type="EC" id="2.3.1.24"/>
<dbReference type="EMBL" id="AAFW02000082">
    <property type="protein sequence ID" value="EDN62230.1"/>
    <property type="molecule type" value="Genomic_DNA"/>
</dbReference>
<dbReference type="SMR" id="A6ZSP9"/>
<dbReference type="GlyCosmos" id="A6ZSP9">
    <property type="glycosylation" value="1 site, No reported glycans"/>
</dbReference>
<dbReference type="HOGENOM" id="CLU_028277_4_0_1"/>
<dbReference type="Proteomes" id="UP000007060">
    <property type="component" value="Unassembled WGS sequence"/>
</dbReference>
<dbReference type="GO" id="GO:0005789">
    <property type="term" value="C:endoplasmic reticulum membrane"/>
    <property type="evidence" value="ECO:0007669"/>
    <property type="project" value="UniProtKB-SubCell"/>
</dbReference>
<dbReference type="GO" id="GO:0050291">
    <property type="term" value="F:sphingosine N-acyltransferase activity"/>
    <property type="evidence" value="ECO:0007669"/>
    <property type="project" value="UniProtKB-EC"/>
</dbReference>
<dbReference type="GO" id="GO:0046513">
    <property type="term" value="P:ceramide biosynthetic process"/>
    <property type="evidence" value="ECO:0007669"/>
    <property type="project" value="InterPro"/>
</dbReference>
<dbReference type="InterPro" id="IPR016439">
    <property type="entry name" value="Lag1/Lac1-like"/>
</dbReference>
<dbReference type="InterPro" id="IPR006634">
    <property type="entry name" value="TLC-dom"/>
</dbReference>
<dbReference type="PANTHER" id="PTHR12560:SF11">
    <property type="entry name" value="CERAMIDE SYNTHASE LAC1-RELATED"/>
    <property type="match status" value="1"/>
</dbReference>
<dbReference type="PANTHER" id="PTHR12560">
    <property type="entry name" value="LONGEVITY ASSURANCE FACTOR 1 LAG1"/>
    <property type="match status" value="1"/>
</dbReference>
<dbReference type="Pfam" id="PF03798">
    <property type="entry name" value="TRAM_LAG1_CLN8"/>
    <property type="match status" value="1"/>
</dbReference>
<dbReference type="SMART" id="SM00724">
    <property type="entry name" value="TLC"/>
    <property type="match status" value="1"/>
</dbReference>
<dbReference type="PROSITE" id="PS50922">
    <property type="entry name" value="TLC"/>
    <property type="match status" value="1"/>
</dbReference>
<name>LAG1_YEAS7</name>
<sequence>MTSATDKSIDRLVVNAKTRRRNSSVGKIDLGDTVPGFAAMPESAASKNEAKKRMKALTGDSKKDSDLLWKVWFSYREMNYRHSWLTPFFILVCVYSAYFLSGNRTESNPLHMFVAISYQVDGTDSYAKGIKDLSFVFFYMIFFTFLREFLMDVVIRPFTVYLNVTSEHRQKRMLEQMYAIFYCGVSGPFGLYIMYHSDLWLFKTKPMYRTYPDITNPFLFKIFYLGQAAFWAQQACVLVLQLEKPRKDYKELVFHHIVTLLLIWSSYVFHFTKMGLAIYITMDVSDFFLSLSKTLNYLNSVFTPFVFGLFVFFWIYLRHVVNIRILWSVLTEFRHEGNYVLNFATQQYKCWISLPIVFVLIAALQLVNLYWLFLILRILYRLIWQGIQKDERSDSDSDESAENEESKEKCE</sequence>
<keyword id="KW-0256">Endoplasmic reticulum</keyword>
<keyword id="KW-0325">Glycoprotein</keyword>
<keyword id="KW-0444">Lipid biosynthesis</keyword>
<keyword id="KW-0443">Lipid metabolism</keyword>
<keyword id="KW-0472">Membrane</keyword>
<keyword id="KW-0597">Phosphoprotein</keyword>
<keyword id="KW-0808">Transferase</keyword>
<keyword id="KW-0812">Transmembrane</keyword>
<keyword id="KW-1133">Transmembrane helix</keyword>